<gene>
    <name evidence="1" type="primary">hrcA</name>
    <name type="ordered locus">TRQ2_0076</name>
</gene>
<proteinExistence type="inferred from homology"/>
<keyword id="KW-0678">Repressor</keyword>
<keyword id="KW-0346">Stress response</keyword>
<keyword id="KW-0804">Transcription</keyword>
<keyword id="KW-0805">Transcription regulation</keyword>
<name>HRCA_THESQ</name>
<organism>
    <name type="scientific">Thermotoga sp. (strain RQ2)</name>
    <dbReference type="NCBI Taxonomy" id="126740"/>
    <lineage>
        <taxon>Bacteria</taxon>
        <taxon>Thermotogati</taxon>
        <taxon>Thermotogota</taxon>
        <taxon>Thermotogae</taxon>
        <taxon>Thermotogales</taxon>
        <taxon>Thermotogaceae</taxon>
        <taxon>Thermotoga</taxon>
    </lineage>
</organism>
<accession>B1LCI0</accession>
<comment type="function">
    <text evidence="1">Negative regulator of class I heat shock genes (grpE-dnaK-dnaJ and groELS operons). Prevents heat-shock induction of these operons.</text>
</comment>
<comment type="similarity">
    <text evidence="1">Belongs to the HrcA family.</text>
</comment>
<reference key="1">
    <citation type="journal article" date="2011" name="J. Bacteriol.">
        <title>Genome sequence of Thermotoga sp. strain RQ2, a hyperthermophilic bacterium isolated from a geothermally heated region of the seafloor near Ribeira Quente, the Azores.</title>
        <authorList>
            <person name="Swithers K.S."/>
            <person name="DiPippo J.L."/>
            <person name="Bruce D.C."/>
            <person name="Detter C."/>
            <person name="Tapia R."/>
            <person name="Han S."/>
            <person name="Saunders E."/>
            <person name="Goodwin L.A."/>
            <person name="Han J."/>
            <person name="Woyke T."/>
            <person name="Pitluck S."/>
            <person name="Pennacchio L."/>
            <person name="Nolan M."/>
            <person name="Mikhailova N."/>
            <person name="Lykidis A."/>
            <person name="Land M.L."/>
            <person name="Brettin T."/>
            <person name="Stetter K.O."/>
            <person name="Nelson K.E."/>
            <person name="Gogarten J.P."/>
            <person name="Noll K.M."/>
        </authorList>
    </citation>
    <scope>NUCLEOTIDE SEQUENCE [LARGE SCALE GENOMIC DNA]</scope>
    <source>
        <strain>RQ2</strain>
    </source>
</reference>
<sequence>MRRLNRKNNEALKKLNDRQRKVLYCIVREYIENKKPVSSQRVLEVSNIEFSSATIRNDMKKLEYLGYIYQPHTSAGRIPTDKGLRFYYEEMLKISKETSEADLAVETFKSVPLADPEKILFLAGNLLARLTQGYVLIERPNTRDLKILRVMLIPVSEDYLIFSILTEFGVSRVTPIKTQERLNWEEIERQLNFLLRGRTIGEVLMGKIESLKGSGFLRLIESLIGETVERYLDAGLENLLKDETLTLEDIRNLLEEVKDQKFLESLVGEGITVRIGREIGRKNLEKFAVFSGRYFKGESPIGSVYFFTSKVTRYDRNHKIFEYILNRLSEYFTSTSRR</sequence>
<evidence type="ECO:0000255" key="1">
    <source>
        <dbReference type="HAMAP-Rule" id="MF_00081"/>
    </source>
</evidence>
<dbReference type="EMBL" id="CP000969">
    <property type="protein sequence ID" value="ACB08438.1"/>
    <property type="molecule type" value="Genomic_DNA"/>
</dbReference>
<dbReference type="RefSeq" id="WP_012310306.1">
    <property type="nucleotide sequence ID" value="NC_010483.1"/>
</dbReference>
<dbReference type="SMR" id="B1LCI0"/>
<dbReference type="KEGG" id="trq:TRQ2_0076"/>
<dbReference type="HOGENOM" id="CLU_050019_1_0_0"/>
<dbReference type="Proteomes" id="UP000001687">
    <property type="component" value="Chromosome"/>
</dbReference>
<dbReference type="GO" id="GO:0003677">
    <property type="term" value="F:DNA binding"/>
    <property type="evidence" value="ECO:0007669"/>
    <property type="project" value="InterPro"/>
</dbReference>
<dbReference type="GO" id="GO:0045892">
    <property type="term" value="P:negative regulation of DNA-templated transcription"/>
    <property type="evidence" value="ECO:0007669"/>
    <property type="project" value="UniProtKB-UniRule"/>
</dbReference>
<dbReference type="Gene3D" id="3.30.450.40">
    <property type="match status" value="1"/>
</dbReference>
<dbReference type="Gene3D" id="3.30.390.60">
    <property type="entry name" value="Heat-inducible transcription repressor hrca homolog, domain 3"/>
    <property type="match status" value="1"/>
</dbReference>
<dbReference type="Gene3D" id="1.10.10.10">
    <property type="entry name" value="Winged helix-like DNA-binding domain superfamily/Winged helix DNA-binding domain"/>
    <property type="match status" value="1"/>
</dbReference>
<dbReference type="HAMAP" id="MF_00081">
    <property type="entry name" value="HrcA"/>
    <property type="match status" value="1"/>
</dbReference>
<dbReference type="InterPro" id="IPR029016">
    <property type="entry name" value="GAF-like_dom_sf"/>
</dbReference>
<dbReference type="InterPro" id="IPR002571">
    <property type="entry name" value="HrcA"/>
</dbReference>
<dbReference type="InterPro" id="IPR021153">
    <property type="entry name" value="HrcA_C"/>
</dbReference>
<dbReference type="InterPro" id="IPR036388">
    <property type="entry name" value="WH-like_DNA-bd_sf"/>
</dbReference>
<dbReference type="InterPro" id="IPR036390">
    <property type="entry name" value="WH_DNA-bd_sf"/>
</dbReference>
<dbReference type="InterPro" id="IPR023120">
    <property type="entry name" value="WHTH_transcript_rep_HrcA_IDD"/>
</dbReference>
<dbReference type="NCBIfam" id="TIGR00331">
    <property type="entry name" value="hrcA"/>
    <property type="match status" value="1"/>
</dbReference>
<dbReference type="PANTHER" id="PTHR34824">
    <property type="entry name" value="HEAT-INDUCIBLE TRANSCRIPTION REPRESSOR HRCA"/>
    <property type="match status" value="1"/>
</dbReference>
<dbReference type="PANTHER" id="PTHR34824:SF1">
    <property type="entry name" value="HEAT-INDUCIBLE TRANSCRIPTION REPRESSOR HRCA"/>
    <property type="match status" value="1"/>
</dbReference>
<dbReference type="Pfam" id="PF01628">
    <property type="entry name" value="HrcA"/>
    <property type="match status" value="1"/>
</dbReference>
<dbReference type="PIRSF" id="PIRSF005485">
    <property type="entry name" value="HrcA"/>
    <property type="match status" value="1"/>
</dbReference>
<dbReference type="SUPFAM" id="SSF55781">
    <property type="entry name" value="GAF domain-like"/>
    <property type="match status" value="1"/>
</dbReference>
<dbReference type="SUPFAM" id="SSF46785">
    <property type="entry name" value="Winged helix' DNA-binding domain"/>
    <property type="match status" value="1"/>
</dbReference>
<protein>
    <recommendedName>
        <fullName evidence="1">Heat-inducible transcription repressor HrcA</fullName>
    </recommendedName>
</protein>
<feature type="chain" id="PRO_1000092836" description="Heat-inducible transcription repressor HrcA">
    <location>
        <begin position="1"/>
        <end position="338"/>
    </location>
</feature>